<comment type="function">
    <text evidence="1">Involved in the gluconeogenesis. Catalyzes the conversion of oxaloacetate (OAA) to phosphoenolpyruvate (PEP) through direct phosphoryl transfer between the nucleoside triphosphate and OAA.</text>
</comment>
<comment type="catalytic activity">
    <reaction evidence="1">
        <text>oxaloacetate + ATP = phosphoenolpyruvate + ADP + CO2</text>
        <dbReference type="Rhea" id="RHEA:18617"/>
        <dbReference type="ChEBI" id="CHEBI:16452"/>
        <dbReference type="ChEBI" id="CHEBI:16526"/>
        <dbReference type="ChEBI" id="CHEBI:30616"/>
        <dbReference type="ChEBI" id="CHEBI:58702"/>
        <dbReference type="ChEBI" id="CHEBI:456216"/>
        <dbReference type="EC" id="4.1.1.49"/>
    </reaction>
</comment>
<comment type="cofactor">
    <cofactor evidence="1">
        <name>Mn(2+)</name>
        <dbReference type="ChEBI" id="CHEBI:29035"/>
    </cofactor>
    <text evidence="1">Binds 1 Mn(2+) ion per subunit.</text>
</comment>
<comment type="pathway">
    <text evidence="1">Carbohydrate biosynthesis; gluconeogenesis.</text>
</comment>
<comment type="subunit">
    <text evidence="1">Monomer.</text>
</comment>
<comment type="subcellular location">
    <subcellularLocation>
        <location evidence="1">Cytoplasm</location>
    </subcellularLocation>
</comment>
<comment type="similarity">
    <text evidence="1">Belongs to the phosphoenolpyruvate carboxykinase (ATP) family.</text>
</comment>
<evidence type="ECO:0000255" key="1">
    <source>
        <dbReference type="HAMAP-Rule" id="MF_00453"/>
    </source>
</evidence>
<organism>
    <name type="scientific">Haemophilus influenzae (strain ATCC 51907 / DSM 11121 / KW20 / Rd)</name>
    <dbReference type="NCBI Taxonomy" id="71421"/>
    <lineage>
        <taxon>Bacteria</taxon>
        <taxon>Pseudomonadati</taxon>
        <taxon>Pseudomonadota</taxon>
        <taxon>Gammaproteobacteria</taxon>
        <taxon>Pasteurellales</taxon>
        <taxon>Pasteurellaceae</taxon>
        <taxon>Haemophilus</taxon>
    </lineage>
</organism>
<proteinExistence type="inferred from homology"/>
<accession>P43923</accession>
<protein>
    <recommendedName>
        <fullName evidence="1">Phosphoenolpyruvate carboxykinase (ATP)</fullName>
        <shortName evidence="1">PCK</shortName>
        <shortName evidence="1">PEP carboxykinase</shortName>
        <shortName evidence="1">PEPCK</shortName>
        <ecNumber evidence="1">4.1.1.49</ecNumber>
    </recommendedName>
</protein>
<feature type="chain" id="PRO_0000203824" description="Phosphoenolpyruvate carboxykinase (ATP)">
    <location>
        <begin position="1"/>
        <end position="538"/>
    </location>
</feature>
<feature type="binding site" evidence="1">
    <location>
        <position position="64"/>
    </location>
    <ligand>
        <name>substrate</name>
    </ligand>
</feature>
<feature type="binding site" evidence="1">
    <location>
        <position position="205"/>
    </location>
    <ligand>
        <name>substrate</name>
    </ligand>
</feature>
<feature type="binding site" evidence="1">
    <location>
        <position position="211"/>
    </location>
    <ligand>
        <name>ATP</name>
        <dbReference type="ChEBI" id="CHEBI:30616"/>
    </ligand>
</feature>
<feature type="binding site" evidence="1">
    <location>
        <position position="211"/>
    </location>
    <ligand>
        <name>Mn(2+)</name>
        <dbReference type="ChEBI" id="CHEBI:29035"/>
    </ligand>
</feature>
<feature type="binding site" evidence="1">
    <location>
        <position position="211"/>
    </location>
    <ligand>
        <name>substrate</name>
    </ligand>
</feature>
<feature type="binding site" evidence="1">
    <location>
        <position position="230"/>
    </location>
    <ligand>
        <name>ATP</name>
        <dbReference type="ChEBI" id="CHEBI:30616"/>
    </ligand>
</feature>
<feature type="binding site" evidence="1">
    <location>
        <position position="230"/>
    </location>
    <ligand>
        <name>Mn(2+)</name>
        <dbReference type="ChEBI" id="CHEBI:29035"/>
    </ligand>
</feature>
<feature type="binding site" evidence="1">
    <location>
        <begin position="246"/>
        <end position="254"/>
    </location>
    <ligand>
        <name>ATP</name>
        <dbReference type="ChEBI" id="CHEBI:30616"/>
    </ligand>
</feature>
<feature type="binding site" evidence="1">
    <location>
        <position position="267"/>
    </location>
    <ligand>
        <name>Mn(2+)</name>
        <dbReference type="ChEBI" id="CHEBI:29035"/>
    </ligand>
</feature>
<feature type="binding site" evidence="1">
    <location>
        <position position="295"/>
    </location>
    <ligand>
        <name>ATP</name>
        <dbReference type="ChEBI" id="CHEBI:30616"/>
    </ligand>
</feature>
<feature type="binding site" evidence="1">
    <location>
        <position position="331"/>
    </location>
    <ligand>
        <name>ATP</name>
        <dbReference type="ChEBI" id="CHEBI:30616"/>
    </ligand>
</feature>
<feature type="binding site" evidence="1">
    <location>
        <position position="331"/>
    </location>
    <ligand>
        <name>substrate</name>
    </ligand>
</feature>
<feature type="binding site" evidence="1">
    <location>
        <begin position="447"/>
        <end position="448"/>
    </location>
    <ligand>
        <name>ATP</name>
        <dbReference type="ChEBI" id="CHEBI:30616"/>
    </ligand>
</feature>
<feature type="binding site" evidence="1">
    <location>
        <position position="453"/>
    </location>
    <ligand>
        <name>ATP</name>
        <dbReference type="ChEBI" id="CHEBI:30616"/>
    </ligand>
</feature>
<reference key="1">
    <citation type="journal article" date="1995" name="Science">
        <title>Whole-genome random sequencing and assembly of Haemophilus influenzae Rd.</title>
        <authorList>
            <person name="Fleischmann R.D."/>
            <person name="Adams M.D."/>
            <person name="White O."/>
            <person name="Clayton R.A."/>
            <person name="Kirkness E.F."/>
            <person name="Kerlavage A.R."/>
            <person name="Bult C.J."/>
            <person name="Tomb J.-F."/>
            <person name="Dougherty B.A."/>
            <person name="Merrick J.M."/>
            <person name="McKenney K."/>
            <person name="Sutton G.G."/>
            <person name="FitzHugh W."/>
            <person name="Fields C.A."/>
            <person name="Gocayne J.D."/>
            <person name="Scott J.D."/>
            <person name="Shirley R."/>
            <person name="Liu L.-I."/>
            <person name="Glodek A."/>
            <person name="Kelley J.M."/>
            <person name="Weidman J.F."/>
            <person name="Phillips C.A."/>
            <person name="Spriggs T."/>
            <person name="Hedblom E."/>
            <person name="Cotton M.D."/>
            <person name="Utterback T.R."/>
            <person name="Hanna M.C."/>
            <person name="Nguyen D.T."/>
            <person name="Saudek D.M."/>
            <person name="Brandon R.C."/>
            <person name="Fine L.D."/>
            <person name="Fritchman J.L."/>
            <person name="Fuhrmann J.L."/>
            <person name="Geoghagen N.S.M."/>
            <person name="Gnehm C.L."/>
            <person name="McDonald L.A."/>
            <person name="Small K.V."/>
            <person name="Fraser C.M."/>
            <person name="Smith H.O."/>
            <person name="Venter J.C."/>
        </authorList>
    </citation>
    <scope>NUCLEOTIDE SEQUENCE [LARGE SCALE GENOMIC DNA]</scope>
    <source>
        <strain>ATCC 51907 / DSM 11121 / KW20 / Rd</strain>
    </source>
</reference>
<gene>
    <name evidence="1" type="primary">pckA</name>
    <name type="ordered locus">HI_0809</name>
</gene>
<sequence length="538" mass="59404">MTDLNKVVKELEALGIYDVKEVVYNPSYEQLFEEETKPGLEGFEKGTLTTTGAVAVDTGIFTGRSPKDKYIVLDEKTKDTVWWTSETAKNDNKPMNQATWQSLKDLVTNQLSRKRLFVVDGFCGASEHDRIAVRIVTEVAWQAHFVKNMFIRPTEEQLKNFEPDFVVMNGSKVTNPNWKEQGLNSENFVAFNLTERIQLIGGTWYGGEMKKGMSSMMNYFLPLKGVGAMHCSANVGKDGDVAIFFGLSGTGKTTLSTDPKRELIGDDEHGWDDVGIFNFEGGCYAKTIHLSEENEPDIYRAIRRDALLENVVVRSDGSVDFDDGSKTENTRVSYPIYHIDNIVKPVSRAGHATKVIFLTADAFGVLPPVSKLTPEQTKYYFLSGFTAKLAGTERGITEPTPTFSACFGAAFLTLHPTQYAEVLVKRMQAAGAEAYLVNTGWNGTGKRISIKDTRGIIDAILDGSIEKAEMGELPIFNLAIPKALPGVDSAILDPRDTYADKAQWQSKAEDLAGRFVKNFVKYATNEEGKALIAAGPKA</sequence>
<dbReference type="EC" id="4.1.1.49" evidence="1"/>
<dbReference type="EMBL" id="L42023">
    <property type="protein sequence ID" value="AAC22468.1"/>
    <property type="molecule type" value="Genomic_DNA"/>
</dbReference>
<dbReference type="PIR" id="E64095">
    <property type="entry name" value="E64095"/>
</dbReference>
<dbReference type="RefSeq" id="NP_438969.1">
    <property type="nucleotide sequence ID" value="NC_000907.1"/>
</dbReference>
<dbReference type="SMR" id="P43923"/>
<dbReference type="STRING" id="71421.HI_0809"/>
<dbReference type="EnsemblBacteria" id="AAC22468">
    <property type="protein sequence ID" value="AAC22468"/>
    <property type="gene ID" value="HI_0809"/>
</dbReference>
<dbReference type="KEGG" id="hin:HI_0809"/>
<dbReference type="PATRIC" id="fig|71421.8.peg.850"/>
<dbReference type="eggNOG" id="COG1866">
    <property type="taxonomic scope" value="Bacteria"/>
</dbReference>
<dbReference type="HOGENOM" id="CLU_018247_0_1_6"/>
<dbReference type="OrthoDB" id="9806325at2"/>
<dbReference type="PhylomeDB" id="P43923"/>
<dbReference type="BioCyc" id="HINF71421:G1GJ1-850-MONOMER"/>
<dbReference type="UniPathway" id="UPA00138"/>
<dbReference type="Proteomes" id="UP000000579">
    <property type="component" value="Chromosome"/>
</dbReference>
<dbReference type="GO" id="GO:0005829">
    <property type="term" value="C:cytosol"/>
    <property type="evidence" value="ECO:0000318"/>
    <property type="project" value="GO_Central"/>
</dbReference>
<dbReference type="GO" id="GO:0005524">
    <property type="term" value="F:ATP binding"/>
    <property type="evidence" value="ECO:0007669"/>
    <property type="project" value="UniProtKB-UniRule"/>
</dbReference>
<dbReference type="GO" id="GO:0046872">
    <property type="term" value="F:metal ion binding"/>
    <property type="evidence" value="ECO:0007669"/>
    <property type="project" value="UniProtKB-KW"/>
</dbReference>
<dbReference type="GO" id="GO:0004612">
    <property type="term" value="F:phosphoenolpyruvate carboxykinase (ATP) activity"/>
    <property type="evidence" value="ECO:0000318"/>
    <property type="project" value="GO_Central"/>
</dbReference>
<dbReference type="GO" id="GO:0006094">
    <property type="term" value="P:gluconeogenesis"/>
    <property type="evidence" value="ECO:0000318"/>
    <property type="project" value="GO_Central"/>
</dbReference>
<dbReference type="CDD" id="cd00484">
    <property type="entry name" value="PEPCK_ATP"/>
    <property type="match status" value="1"/>
</dbReference>
<dbReference type="FunFam" id="2.170.8.10:FF:000001">
    <property type="entry name" value="Phosphoenolpyruvate carboxykinase (ATP)"/>
    <property type="match status" value="1"/>
</dbReference>
<dbReference type="FunFam" id="3.40.449.10:FF:000001">
    <property type="entry name" value="Phosphoenolpyruvate carboxykinase (ATP)"/>
    <property type="match status" value="1"/>
</dbReference>
<dbReference type="Gene3D" id="3.90.228.20">
    <property type="match status" value="1"/>
</dbReference>
<dbReference type="Gene3D" id="3.40.449.10">
    <property type="entry name" value="Phosphoenolpyruvate Carboxykinase, domain 1"/>
    <property type="match status" value="1"/>
</dbReference>
<dbReference type="Gene3D" id="2.170.8.10">
    <property type="entry name" value="Phosphoenolpyruvate Carboxykinase, domain 2"/>
    <property type="match status" value="1"/>
</dbReference>
<dbReference type="HAMAP" id="MF_00453">
    <property type="entry name" value="PEPCK_ATP"/>
    <property type="match status" value="1"/>
</dbReference>
<dbReference type="InterPro" id="IPR001272">
    <property type="entry name" value="PEP_carboxykinase_ATP"/>
</dbReference>
<dbReference type="InterPro" id="IPR013035">
    <property type="entry name" value="PEP_carboxykinase_C"/>
</dbReference>
<dbReference type="InterPro" id="IPR008210">
    <property type="entry name" value="PEP_carboxykinase_N"/>
</dbReference>
<dbReference type="InterPro" id="IPR015994">
    <property type="entry name" value="PEPCK_ATP_CS"/>
</dbReference>
<dbReference type="NCBIfam" id="TIGR00224">
    <property type="entry name" value="pckA"/>
    <property type="match status" value="1"/>
</dbReference>
<dbReference type="NCBIfam" id="NF006819">
    <property type="entry name" value="PRK09344.1-1"/>
    <property type="match status" value="1"/>
</dbReference>
<dbReference type="NCBIfam" id="NF006820">
    <property type="entry name" value="PRK09344.1-2"/>
    <property type="match status" value="1"/>
</dbReference>
<dbReference type="NCBIfam" id="NF006821">
    <property type="entry name" value="PRK09344.1-3"/>
    <property type="match status" value="1"/>
</dbReference>
<dbReference type="PANTHER" id="PTHR30031:SF0">
    <property type="entry name" value="PHOSPHOENOLPYRUVATE CARBOXYKINASE (ATP)"/>
    <property type="match status" value="1"/>
</dbReference>
<dbReference type="PANTHER" id="PTHR30031">
    <property type="entry name" value="PHOSPHOENOLPYRUVATE CARBOXYKINASE ATP"/>
    <property type="match status" value="1"/>
</dbReference>
<dbReference type="Pfam" id="PF01293">
    <property type="entry name" value="PEPCK_ATP"/>
    <property type="match status" value="1"/>
</dbReference>
<dbReference type="PIRSF" id="PIRSF006294">
    <property type="entry name" value="PEP_crbxkin"/>
    <property type="match status" value="1"/>
</dbReference>
<dbReference type="SUPFAM" id="SSF68923">
    <property type="entry name" value="PEP carboxykinase N-terminal domain"/>
    <property type="match status" value="1"/>
</dbReference>
<dbReference type="SUPFAM" id="SSF53795">
    <property type="entry name" value="PEP carboxykinase-like"/>
    <property type="match status" value="1"/>
</dbReference>
<dbReference type="PROSITE" id="PS00532">
    <property type="entry name" value="PEPCK_ATP"/>
    <property type="match status" value="1"/>
</dbReference>
<name>PCKA_HAEIN</name>
<keyword id="KW-0067">ATP-binding</keyword>
<keyword id="KW-0963">Cytoplasm</keyword>
<keyword id="KW-0210">Decarboxylase</keyword>
<keyword id="KW-0312">Gluconeogenesis</keyword>
<keyword id="KW-0456">Lyase</keyword>
<keyword id="KW-0464">Manganese</keyword>
<keyword id="KW-0479">Metal-binding</keyword>
<keyword id="KW-0547">Nucleotide-binding</keyword>
<keyword id="KW-1185">Reference proteome</keyword>